<protein>
    <recommendedName>
        <fullName evidence="1">UPF0102 protein ABAYE2669</fullName>
    </recommendedName>
</protein>
<sequence>MLVAQQLGQWAEQTALKLLKEQNYEWVASNYHSRRGEVDLIVKRGNELIFVEVKARGQGNYGQACEMVTLSKQKKIIKTAMRFLQRYPSYQDFYCRFDVICFDFPQKIAKTVQQDFSKFHYDLQWIENAFTLD</sequence>
<organism>
    <name type="scientific">Acinetobacter baumannii (strain AYE)</name>
    <dbReference type="NCBI Taxonomy" id="509173"/>
    <lineage>
        <taxon>Bacteria</taxon>
        <taxon>Pseudomonadati</taxon>
        <taxon>Pseudomonadota</taxon>
        <taxon>Gammaproteobacteria</taxon>
        <taxon>Moraxellales</taxon>
        <taxon>Moraxellaceae</taxon>
        <taxon>Acinetobacter</taxon>
        <taxon>Acinetobacter calcoaceticus/baumannii complex</taxon>
    </lineage>
</organism>
<dbReference type="EMBL" id="CU459141">
    <property type="protein sequence ID" value="CAM87501.1"/>
    <property type="molecule type" value="Genomic_DNA"/>
</dbReference>
<dbReference type="RefSeq" id="WP_000959396.1">
    <property type="nucleotide sequence ID" value="NZ_JBDGFB010000015.1"/>
</dbReference>
<dbReference type="SMR" id="B0VA98"/>
<dbReference type="EnsemblBacteria" id="CAM87501">
    <property type="protein sequence ID" value="CAM87501"/>
    <property type="gene ID" value="ABAYE2669"/>
</dbReference>
<dbReference type="KEGG" id="aby:ABAYE2669"/>
<dbReference type="HOGENOM" id="CLU_115353_1_1_6"/>
<dbReference type="GO" id="GO:0003676">
    <property type="term" value="F:nucleic acid binding"/>
    <property type="evidence" value="ECO:0007669"/>
    <property type="project" value="InterPro"/>
</dbReference>
<dbReference type="CDD" id="cd20736">
    <property type="entry name" value="PoNe_Nuclease"/>
    <property type="match status" value="1"/>
</dbReference>
<dbReference type="Gene3D" id="3.40.1350.10">
    <property type="match status" value="1"/>
</dbReference>
<dbReference type="HAMAP" id="MF_00048">
    <property type="entry name" value="UPF0102"/>
    <property type="match status" value="1"/>
</dbReference>
<dbReference type="InterPro" id="IPR011335">
    <property type="entry name" value="Restrct_endonuc-II-like"/>
</dbReference>
<dbReference type="InterPro" id="IPR011856">
    <property type="entry name" value="tRNA_endonuc-like_dom_sf"/>
</dbReference>
<dbReference type="InterPro" id="IPR003509">
    <property type="entry name" value="UPF0102_YraN-like"/>
</dbReference>
<dbReference type="NCBIfam" id="NF009150">
    <property type="entry name" value="PRK12497.1-3"/>
    <property type="match status" value="1"/>
</dbReference>
<dbReference type="NCBIfam" id="NF011267">
    <property type="entry name" value="PRK14674.1"/>
    <property type="match status" value="1"/>
</dbReference>
<dbReference type="NCBIfam" id="TIGR00252">
    <property type="entry name" value="YraN family protein"/>
    <property type="match status" value="1"/>
</dbReference>
<dbReference type="PANTHER" id="PTHR34039">
    <property type="entry name" value="UPF0102 PROTEIN YRAN"/>
    <property type="match status" value="1"/>
</dbReference>
<dbReference type="PANTHER" id="PTHR34039:SF1">
    <property type="entry name" value="UPF0102 PROTEIN YRAN"/>
    <property type="match status" value="1"/>
</dbReference>
<dbReference type="Pfam" id="PF02021">
    <property type="entry name" value="UPF0102"/>
    <property type="match status" value="1"/>
</dbReference>
<dbReference type="SUPFAM" id="SSF52980">
    <property type="entry name" value="Restriction endonuclease-like"/>
    <property type="match status" value="1"/>
</dbReference>
<gene>
    <name type="ordered locus">ABAYE2669</name>
</gene>
<feature type="chain" id="PRO_1000091222" description="UPF0102 protein ABAYE2669">
    <location>
        <begin position="1"/>
        <end position="133"/>
    </location>
</feature>
<evidence type="ECO:0000255" key="1">
    <source>
        <dbReference type="HAMAP-Rule" id="MF_00048"/>
    </source>
</evidence>
<accession>B0VA98</accession>
<name>Y2669_ACIBY</name>
<proteinExistence type="inferred from homology"/>
<reference key="1">
    <citation type="journal article" date="2008" name="PLoS ONE">
        <title>Comparative analysis of Acinetobacters: three genomes for three lifestyles.</title>
        <authorList>
            <person name="Vallenet D."/>
            <person name="Nordmann P."/>
            <person name="Barbe V."/>
            <person name="Poirel L."/>
            <person name="Mangenot S."/>
            <person name="Bataille E."/>
            <person name="Dossat C."/>
            <person name="Gas S."/>
            <person name="Kreimeyer A."/>
            <person name="Lenoble P."/>
            <person name="Oztas S."/>
            <person name="Poulain J."/>
            <person name="Segurens B."/>
            <person name="Robert C."/>
            <person name="Abergel C."/>
            <person name="Claverie J.-M."/>
            <person name="Raoult D."/>
            <person name="Medigue C."/>
            <person name="Weissenbach J."/>
            <person name="Cruveiller S."/>
        </authorList>
    </citation>
    <scope>NUCLEOTIDE SEQUENCE [LARGE SCALE GENOMIC DNA]</scope>
    <source>
        <strain>AYE</strain>
    </source>
</reference>
<comment type="similarity">
    <text evidence="1">Belongs to the UPF0102 family.</text>
</comment>